<accession>Q8E3F9</accession>
<evidence type="ECO:0000255" key="1">
    <source>
        <dbReference type="HAMAP-Rule" id="MF_01445"/>
    </source>
</evidence>
<organism>
    <name type="scientific">Streptococcus agalactiae serotype III (strain NEM316)</name>
    <dbReference type="NCBI Taxonomy" id="211110"/>
    <lineage>
        <taxon>Bacteria</taxon>
        <taxon>Bacillati</taxon>
        <taxon>Bacillota</taxon>
        <taxon>Bacilli</taxon>
        <taxon>Lactobacillales</taxon>
        <taxon>Streptococcaceae</taxon>
        <taxon>Streptococcus</taxon>
    </lineage>
</organism>
<feature type="chain" id="PRO_0000303558" description="tRNA N6-adenosine threonylcarbamoyltransferase">
    <location>
        <begin position="1"/>
        <end position="336"/>
    </location>
</feature>
<feature type="binding site" evidence="1">
    <location>
        <position position="114"/>
    </location>
    <ligand>
        <name>Fe cation</name>
        <dbReference type="ChEBI" id="CHEBI:24875"/>
    </ligand>
</feature>
<feature type="binding site" evidence="1">
    <location>
        <position position="118"/>
    </location>
    <ligand>
        <name>Fe cation</name>
        <dbReference type="ChEBI" id="CHEBI:24875"/>
    </ligand>
</feature>
<feature type="binding site" evidence="1">
    <location>
        <begin position="136"/>
        <end position="140"/>
    </location>
    <ligand>
        <name>substrate</name>
    </ligand>
</feature>
<feature type="binding site" evidence="1">
    <location>
        <position position="169"/>
    </location>
    <ligand>
        <name>substrate</name>
    </ligand>
</feature>
<feature type="binding site" evidence="1">
    <location>
        <position position="182"/>
    </location>
    <ligand>
        <name>substrate</name>
    </ligand>
</feature>
<feature type="binding site" evidence="1">
    <location>
        <position position="186"/>
    </location>
    <ligand>
        <name>substrate</name>
    </ligand>
</feature>
<feature type="binding site" evidence="1">
    <location>
        <position position="275"/>
    </location>
    <ligand>
        <name>substrate</name>
    </ligand>
</feature>
<feature type="binding site" evidence="1">
    <location>
        <position position="302"/>
    </location>
    <ligand>
        <name>Fe cation</name>
        <dbReference type="ChEBI" id="CHEBI:24875"/>
    </ligand>
</feature>
<gene>
    <name evidence="1" type="primary">tsaD</name>
    <name type="synonym">gcp</name>
    <name type="ordered locus">gbs1800</name>
</gene>
<dbReference type="EC" id="2.3.1.234" evidence="1"/>
<dbReference type="EMBL" id="AL766853">
    <property type="protein sequence ID" value="CAD47459.1"/>
    <property type="molecule type" value="Genomic_DNA"/>
</dbReference>
<dbReference type="RefSeq" id="WP_000655092.1">
    <property type="nucleotide sequence ID" value="NC_004368.1"/>
</dbReference>
<dbReference type="SMR" id="Q8E3F9"/>
<dbReference type="KEGG" id="san:gbs1800"/>
<dbReference type="eggNOG" id="COG0533">
    <property type="taxonomic scope" value="Bacteria"/>
</dbReference>
<dbReference type="HOGENOM" id="CLU_023208_0_2_9"/>
<dbReference type="Proteomes" id="UP000000823">
    <property type="component" value="Chromosome"/>
</dbReference>
<dbReference type="GO" id="GO:0005737">
    <property type="term" value="C:cytoplasm"/>
    <property type="evidence" value="ECO:0007669"/>
    <property type="project" value="UniProtKB-SubCell"/>
</dbReference>
<dbReference type="GO" id="GO:0005506">
    <property type="term" value="F:iron ion binding"/>
    <property type="evidence" value="ECO:0007669"/>
    <property type="project" value="UniProtKB-UniRule"/>
</dbReference>
<dbReference type="GO" id="GO:0061711">
    <property type="term" value="F:N(6)-L-threonylcarbamoyladenine synthase activity"/>
    <property type="evidence" value="ECO:0007669"/>
    <property type="project" value="UniProtKB-EC"/>
</dbReference>
<dbReference type="GO" id="GO:0002949">
    <property type="term" value="P:tRNA threonylcarbamoyladenosine modification"/>
    <property type="evidence" value="ECO:0007669"/>
    <property type="project" value="UniProtKB-UniRule"/>
</dbReference>
<dbReference type="CDD" id="cd24133">
    <property type="entry name" value="ASKHA_NBD_TsaD_bac"/>
    <property type="match status" value="1"/>
</dbReference>
<dbReference type="FunFam" id="3.30.420.40:FF:000012">
    <property type="entry name" value="tRNA N6-adenosine threonylcarbamoyltransferase"/>
    <property type="match status" value="1"/>
</dbReference>
<dbReference type="FunFam" id="3.30.420.40:FF:000040">
    <property type="entry name" value="tRNA N6-adenosine threonylcarbamoyltransferase"/>
    <property type="match status" value="1"/>
</dbReference>
<dbReference type="Gene3D" id="3.30.420.40">
    <property type="match status" value="2"/>
</dbReference>
<dbReference type="HAMAP" id="MF_01445">
    <property type="entry name" value="TsaD"/>
    <property type="match status" value="1"/>
</dbReference>
<dbReference type="InterPro" id="IPR043129">
    <property type="entry name" value="ATPase_NBD"/>
</dbReference>
<dbReference type="InterPro" id="IPR000905">
    <property type="entry name" value="Gcp-like_dom"/>
</dbReference>
<dbReference type="InterPro" id="IPR017861">
    <property type="entry name" value="KAE1/TsaD"/>
</dbReference>
<dbReference type="InterPro" id="IPR022450">
    <property type="entry name" value="TsaD"/>
</dbReference>
<dbReference type="NCBIfam" id="TIGR00329">
    <property type="entry name" value="gcp_kae1"/>
    <property type="match status" value="1"/>
</dbReference>
<dbReference type="NCBIfam" id="TIGR03723">
    <property type="entry name" value="T6A_TsaD_YgjD"/>
    <property type="match status" value="1"/>
</dbReference>
<dbReference type="PANTHER" id="PTHR11735">
    <property type="entry name" value="TRNA N6-ADENOSINE THREONYLCARBAMOYLTRANSFERASE"/>
    <property type="match status" value="1"/>
</dbReference>
<dbReference type="PANTHER" id="PTHR11735:SF6">
    <property type="entry name" value="TRNA N6-ADENOSINE THREONYLCARBAMOYLTRANSFERASE, MITOCHONDRIAL"/>
    <property type="match status" value="1"/>
</dbReference>
<dbReference type="Pfam" id="PF00814">
    <property type="entry name" value="TsaD"/>
    <property type="match status" value="1"/>
</dbReference>
<dbReference type="PRINTS" id="PR00789">
    <property type="entry name" value="OSIALOPTASE"/>
</dbReference>
<dbReference type="SUPFAM" id="SSF53067">
    <property type="entry name" value="Actin-like ATPase domain"/>
    <property type="match status" value="1"/>
</dbReference>
<keyword id="KW-0012">Acyltransferase</keyword>
<keyword id="KW-0963">Cytoplasm</keyword>
<keyword id="KW-0408">Iron</keyword>
<keyword id="KW-0479">Metal-binding</keyword>
<keyword id="KW-0808">Transferase</keyword>
<keyword id="KW-0819">tRNA processing</keyword>
<reference key="1">
    <citation type="journal article" date="2002" name="Mol. Microbiol.">
        <title>Genome sequence of Streptococcus agalactiae, a pathogen causing invasive neonatal disease.</title>
        <authorList>
            <person name="Glaser P."/>
            <person name="Rusniok C."/>
            <person name="Buchrieser C."/>
            <person name="Chevalier F."/>
            <person name="Frangeul L."/>
            <person name="Msadek T."/>
            <person name="Zouine M."/>
            <person name="Couve E."/>
            <person name="Lalioui L."/>
            <person name="Poyart C."/>
            <person name="Trieu-Cuot P."/>
            <person name="Kunst F."/>
        </authorList>
    </citation>
    <scope>NUCLEOTIDE SEQUENCE [LARGE SCALE GENOMIC DNA]</scope>
    <source>
        <strain>NEM316</strain>
    </source>
</reference>
<proteinExistence type="inferred from homology"/>
<comment type="function">
    <text evidence="1">Required for the formation of a threonylcarbamoyl group on adenosine at position 37 (t(6)A37) in tRNAs that read codons beginning with adenine. Is involved in the transfer of the threonylcarbamoyl moiety of threonylcarbamoyl-AMP (TC-AMP) to the N6 group of A37, together with TsaE and TsaB. TsaD likely plays a direct catalytic role in this reaction.</text>
</comment>
<comment type="catalytic activity">
    <reaction evidence="1">
        <text>L-threonylcarbamoyladenylate + adenosine(37) in tRNA = N(6)-L-threonylcarbamoyladenosine(37) in tRNA + AMP + H(+)</text>
        <dbReference type="Rhea" id="RHEA:37059"/>
        <dbReference type="Rhea" id="RHEA-COMP:10162"/>
        <dbReference type="Rhea" id="RHEA-COMP:10163"/>
        <dbReference type="ChEBI" id="CHEBI:15378"/>
        <dbReference type="ChEBI" id="CHEBI:73682"/>
        <dbReference type="ChEBI" id="CHEBI:74411"/>
        <dbReference type="ChEBI" id="CHEBI:74418"/>
        <dbReference type="ChEBI" id="CHEBI:456215"/>
        <dbReference type="EC" id="2.3.1.234"/>
    </reaction>
</comment>
<comment type="cofactor">
    <cofactor evidence="1">
        <name>Fe(2+)</name>
        <dbReference type="ChEBI" id="CHEBI:29033"/>
    </cofactor>
    <text evidence="1">Binds 1 Fe(2+) ion per subunit.</text>
</comment>
<comment type="subcellular location">
    <subcellularLocation>
        <location evidence="1">Cytoplasm</location>
    </subcellularLocation>
</comment>
<comment type="similarity">
    <text evidence="1">Belongs to the KAE1 / TsaD family.</text>
</comment>
<sequence length="336" mass="36022">MKDRYILAVESSCDETSVAILKNDKELLANIIASQVESHKRFGGVVPEVASRHHVEVVTTCFEDALQEAGIVASDLDAVAVTYGPGLVGALLVGMAAAKAFAWANKLPLIPVNHMAGHLMAARDVKELQYPLLALLVSGGHTELVYVSGPGDYKIVGETRDDAVGEAYDKVGRVMGLTYPAGREIDQLAHKGQDTYHFPRAMIKEDHLEFSFSGLKSAFINLHHNAEQKGEALVLEDLCASFQAAVLDILLAKTQKALLKYPVKTLVVAGGVAANQGLRERLATDISPDIDVVIPPLRLCGDNAGMIALAAAIEFEKENFASLKLNAKPSLAFEGL</sequence>
<protein>
    <recommendedName>
        <fullName evidence="1">tRNA N6-adenosine threonylcarbamoyltransferase</fullName>
        <ecNumber evidence="1">2.3.1.234</ecNumber>
    </recommendedName>
    <alternativeName>
        <fullName evidence="1">N6-L-threonylcarbamoyladenine synthase</fullName>
        <shortName evidence="1">t(6)A synthase</shortName>
    </alternativeName>
    <alternativeName>
        <fullName evidence="1">t(6)A37 threonylcarbamoyladenosine biosynthesis protein TsaD</fullName>
    </alternativeName>
    <alternativeName>
        <fullName evidence="1">tRNA threonylcarbamoyladenosine biosynthesis protein TsaD</fullName>
    </alternativeName>
</protein>
<name>TSAD_STRA3</name>